<gene>
    <name evidence="1" type="primary">argG</name>
    <name type="ordered locus">CFF8240_0842</name>
</gene>
<feature type="chain" id="PRO_0000321305" description="Argininosuccinate synthase">
    <location>
        <begin position="1"/>
        <end position="407"/>
    </location>
</feature>
<feature type="binding site" evidence="1">
    <location>
        <begin position="12"/>
        <end position="20"/>
    </location>
    <ligand>
        <name>ATP</name>
        <dbReference type="ChEBI" id="CHEBI:30616"/>
    </ligand>
</feature>
<feature type="binding site" evidence="1">
    <location>
        <position position="39"/>
    </location>
    <ligand>
        <name>ATP</name>
        <dbReference type="ChEBI" id="CHEBI:30616"/>
    </ligand>
</feature>
<feature type="binding site" evidence="1">
    <location>
        <position position="92"/>
    </location>
    <ligand>
        <name>L-citrulline</name>
        <dbReference type="ChEBI" id="CHEBI:57743"/>
    </ligand>
</feature>
<feature type="binding site" evidence="1">
    <location>
        <position position="97"/>
    </location>
    <ligand>
        <name>L-citrulline</name>
        <dbReference type="ChEBI" id="CHEBI:57743"/>
    </ligand>
</feature>
<feature type="binding site" evidence="1">
    <location>
        <position position="122"/>
    </location>
    <ligand>
        <name>ATP</name>
        <dbReference type="ChEBI" id="CHEBI:30616"/>
    </ligand>
</feature>
<feature type="binding site" evidence="1">
    <location>
        <position position="124"/>
    </location>
    <ligand>
        <name>L-aspartate</name>
        <dbReference type="ChEBI" id="CHEBI:29991"/>
    </ligand>
</feature>
<feature type="binding site" evidence="1">
    <location>
        <position position="128"/>
    </location>
    <ligand>
        <name>L-aspartate</name>
        <dbReference type="ChEBI" id="CHEBI:29991"/>
    </ligand>
</feature>
<feature type="binding site" evidence="1">
    <location>
        <position position="128"/>
    </location>
    <ligand>
        <name>L-citrulline</name>
        <dbReference type="ChEBI" id="CHEBI:57743"/>
    </ligand>
</feature>
<feature type="binding site" evidence="1">
    <location>
        <position position="129"/>
    </location>
    <ligand>
        <name>L-aspartate</name>
        <dbReference type="ChEBI" id="CHEBI:29991"/>
    </ligand>
</feature>
<feature type="binding site" evidence="1">
    <location>
        <position position="132"/>
    </location>
    <ligand>
        <name>L-citrulline</name>
        <dbReference type="ChEBI" id="CHEBI:57743"/>
    </ligand>
</feature>
<feature type="binding site" evidence="1">
    <location>
        <position position="182"/>
    </location>
    <ligand>
        <name>L-citrulline</name>
        <dbReference type="ChEBI" id="CHEBI:57743"/>
    </ligand>
</feature>
<feature type="binding site" evidence="1">
    <location>
        <position position="191"/>
    </location>
    <ligand>
        <name>L-citrulline</name>
        <dbReference type="ChEBI" id="CHEBI:57743"/>
    </ligand>
</feature>
<feature type="binding site" evidence="1">
    <location>
        <position position="267"/>
    </location>
    <ligand>
        <name>L-citrulline</name>
        <dbReference type="ChEBI" id="CHEBI:57743"/>
    </ligand>
</feature>
<feature type="binding site" evidence="1">
    <location>
        <position position="279"/>
    </location>
    <ligand>
        <name>L-citrulline</name>
        <dbReference type="ChEBI" id="CHEBI:57743"/>
    </ligand>
</feature>
<keyword id="KW-0028">Amino-acid biosynthesis</keyword>
<keyword id="KW-0055">Arginine biosynthesis</keyword>
<keyword id="KW-0067">ATP-binding</keyword>
<keyword id="KW-0963">Cytoplasm</keyword>
<keyword id="KW-0436">Ligase</keyword>
<keyword id="KW-0547">Nucleotide-binding</keyword>
<proteinExistence type="inferred from homology"/>
<evidence type="ECO:0000255" key="1">
    <source>
        <dbReference type="HAMAP-Rule" id="MF_00005"/>
    </source>
</evidence>
<reference key="1">
    <citation type="submission" date="2006-11" db="EMBL/GenBank/DDBJ databases">
        <title>Sequence of Campylobacter fetus subsp. fetus 82-40.</title>
        <authorList>
            <person name="Fouts D.E."/>
            <person name="Nelson K.E."/>
        </authorList>
    </citation>
    <scope>NUCLEOTIDE SEQUENCE [LARGE SCALE GENOMIC DNA]</scope>
    <source>
        <strain>82-40</strain>
    </source>
</reference>
<organism>
    <name type="scientific">Campylobacter fetus subsp. fetus (strain 82-40)</name>
    <dbReference type="NCBI Taxonomy" id="360106"/>
    <lineage>
        <taxon>Bacteria</taxon>
        <taxon>Pseudomonadati</taxon>
        <taxon>Campylobacterota</taxon>
        <taxon>Epsilonproteobacteria</taxon>
        <taxon>Campylobacterales</taxon>
        <taxon>Campylobacteraceae</taxon>
        <taxon>Campylobacter</taxon>
    </lineage>
</organism>
<comment type="catalytic activity">
    <reaction evidence="1">
        <text>L-citrulline + L-aspartate + ATP = 2-(N(omega)-L-arginino)succinate + AMP + diphosphate + H(+)</text>
        <dbReference type="Rhea" id="RHEA:10932"/>
        <dbReference type="ChEBI" id="CHEBI:15378"/>
        <dbReference type="ChEBI" id="CHEBI:29991"/>
        <dbReference type="ChEBI" id="CHEBI:30616"/>
        <dbReference type="ChEBI" id="CHEBI:33019"/>
        <dbReference type="ChEBI" id="CHEBI:57472"/>
        <dbReference type="ChEBI" id="CHEBI:57743"/>
        <dbReference type="ChEBI" id="CHEBI:456215"/>
        <dbReference type="EC" id="6.3.4.5"/>
    </reaction>
</comment>
<comment type="pathway">
    <text evidence="1">Amino-acid biosynthesis; L-arginine biosynthesis; L-arginine from L-ornithine and carbamoyl phosphate: step 2/3.</text>
</comment>
<comment type="subunit">
    <text evidence="1">Homotetramer.</text>
</comment>
<comment type="subcellular location">
    <subcellularLocation>
        <location evidence="1">Cytoplasm</location>
    </subcellularLocation>
</comment>
<comment type="similarity">
    <text evidence="1">Belongs to the argininosuccinate synthase family. Type 1 subfamily.</text>
</comment>
<protein>
    <recommendedName>
        <fullName evidence="1">Argininosuccinate synthase</fullName>
        <ecNumber evidence="1">6.3.4.5</ecNumber>
    </recommendedName>
    <alternativeName>
        <fullName evidence="1">Citrulline--aspartate ligase</fullName>
    </alternativeName>
</protein>
<name>ASSY_CAMFF</name>
<sequence>MQKKDVKKVVLAYSGGLDTSIILKWLQDEYKCEVVTFTADIGQGEEVEPARKKAISLGIKPENIFIEDLREEFVKDFVFPMFRANAIYEGEYLLGTSIARPLIAKRLVEIAAATKADCVSHGATGKGNDQVRFEIGAYALNPNIKVIAPWREWDLNSREKLLAYAEKNGIDISKKKGKSPYSMDANLLHISYEGLVLEDPNHAPEEDMWRWSVSPKNAPDESDIIEIEYKNGDPVAINAKSMKPHEILTELNRLGAKHGIGRLDIVENRYVGMKSRGCYETPGGTIMLKAHRAIESITMDREAAHLKDELMPKYASLVYNGYWFSPERKMLQAAIDESQKNVNGTVRVELYKGNVMVIGRDSKTDNLFNEAYCTFEEDSVYDQKDANGFIKLNALRFIIAGKNGRKF</sequence>
<accession>A0RP84</accession>
<dbReference type="EC" id="6.3.4.5" evidence="1"/>
<dbReference type="EMBL" id="CP000487">
    <property type="protein sequence ID" value="ABK82085.1"/>
    <property type="molecule type" value="Genomic_DNA"/>
</dbReference>
<dbReference type="RefSeq" id="WP_002849322.1">
    <property type="nucleotide sequence ID" value="NC_008599.1"/>
</dbReference>
<dbReference type="SMR" id="A0RP84"/>
<dbReference type="KEGG" id="cff:CFF8240_0842"/>
<dbReference type="eggNOG" id="COG0137">
    <property type="taxonomic scope" value="Bacteria"/>
</dbReference>
<dbReference type="HOGENOM" id="CLU_032784_4_2_7"/>
<dbReference type="UniPathway" id="UPA00068">
    <property type="reaction ID" value="UER00113"/>
</dbReference>
<dbReference type="Proteomes" id="UP000000760">
    <property type="component" value="Chromosome"/>
</dbReference>
<dbReference type="GO" id="GO:0005737">
    <property type="term" value="C:cytoplasm"/>
    <property type="evidence" value="ECO:0007669"/>
    <property type="project" value="UniProtKB-SubCell"/>
</dbReference>
<dbReference type="GO" id="GO:0004055">
    <property type="term" value="F:argininosuccinate synthase activity"/>
    <property type="evidence" value="ECO:0007669"/>
    <property type="project" value="UniProtKB-UniRule"/>
</dbReference>
<dbReference type="GO" id="GO:0005524">
    <property type="term" value="F:ATP binding"/>
    <property type="evidence" value="ECO:0007669"/>
    <property type="project" value="UniProtKB-UniRule"/>
</dbReference>
<dbReference type="GO" id="GO:0000053">
    <property type="term" value="P:argininosuccinate metabolic process"/>
    <property type="evidence" value="ECO:0007669"/>
    <property type="project" value="TreeGrafter"/>
</dbReference>
<dbReference type="GO" id="GO:0006526">
    <property type="term" value="P:L-arginine biosynthetic process"/>
    <property type="evidence" value="ECO:0007669"/>
    <property type="project" value="UniProtKB-UniRule"/>
</dbReference>
<dbReference type="GO" id="GO:0000050">
    <property type="term" value="P:urea cycle"/>
    <property type="evidence" value="ECO:0007669"/>
    <property type="project" value="TreeGrafter"/>
</dbReference>
<dbReference type="CDD" id="cd01999">
    <property type="entry name" value="ASS"/>
    <property type="match status" value="1"/>
</dbReference>
<dbReference type="FunFam" id="3.40.50.620:FF:000019">
    <property type="entry name" value="Argininosuccinate synthase"/>
    <property type="match status" value="1"/>
</dbReference>
<dbReference type="FunFam" id="3.90.1260.10:FF:000007">
    <property type="entry name" value="Argininosuccinate synthase"/>
    <property type="match status" value="1"/>
</dbReference>
<dbReference type="Gene3D" id="3.90.1260.10">
    <property type="entry name" value="Argininosuccinate synthetase, chain A, domain 2"/>
    <property type="match status" value="1"/>
</dbReference>
<dbReference type="Gene3D" id="3.40.50.620">
    <property type="entry name" value="HUPs"/>
    <property type="match status" value="1"/>
</dbReference>
<dbReference type="Gene3D" id="1.20.5.470">
    <property type="entry name" value="Single helix bin"/>
    <property type="match status" value="1"/>
</dbReference>
<dbReference type="HAMAP" id="MF_00005">
    <property type="entry name" value="Arg_succ_synth_type1"/>
    <property type="match status" value="1"/>
</dbReference>
<dbReference type="InterPro" id="IPR048268">
    <property type="entry name" value="Arginosuc_syn_C"/>
</dbReference>
<dbReference type="InterPro" id="IPR048267">
    <property type="entry name" value="Arginosuc_syn_N"/>
</dbReference>
<dbReference type="InterPro" id="IPR001518">
    <property type="entry name" value="Arginosuc_synth"/>
</dbReference>
<dbReference type="InterPro" id="IPR018223">
    <property type="entry name" value="Arginosuc_synth_CS"/>
</dbReference>
<dbReference type="InterPro" id="IPR023434">
    <property type="entry name" value="Arginosuc_synth_type_1_subfam"/>
</dbReference>
<dbReference type="InterPro" id="IPR024074">
    <property type="entry name" value="AS_cat/multimer_dom_body"/>
</dbReference>
<dbReference type="InterPro" id="IPR014729">
    <property type="entry name" value="Rossmann-like_a/b/a_fold"/>
</dbReference>
<dbReference type="NCBIfam" id="TIGR00032">
    <property type="entry name" value="argG"/>
    <property type="match status" value="1"/>
</dbReference>
<dbReference type="NCBIfam" id="NF001770">
    <property type="entry name" value="PRK00509.1"/>
    <property type="match status" value="1"/>
</dbReference>
<dbReference type="PANTHER" id="PTHR11587">
    <property type="entry name" value="ARGININOSUCCINATE SYNTHASE"/>
    <property type="match status" value="1"/>
</dbReference>
<dbReference type="PANTHER" id="PTHR11587:SF2">
    <property type="entry name" value="ARGININOSUCCINATE SYNTHASE"/>
    <property type="match status" value="1"/>
</dbReference>
<dbReference type="Pfam" id="PF20979">
    <property type="entry name" value="Arginosuc_syn_C"/>
    <property type="match status" value="1"/>
</dbReference>
<dbReference type="Pfam" id="PF00764">
    <property type="entry name" value="Arginosuc_synth"/>
    <property type="match status" value="1"/>
</dbReference>
<dbReference type="SUPFAM" id="SSF52402">
    <property type="entry name" value="Adenine nucleotide alpha hydrolases-like"/>
    <property type="match status" value="1"/>
</dbReference>
<dbReference type="SUPFAM" id="SSF69864">
    <property type="entry name" value="Argininosuccinate synthetase, C-terminal domain"/>
    <property type="match status" value="1"/>
</dbReference>
<dbReference type="PROSITE" id="PS00564">
    <property type="entry name" value="ARGININOSUCCIN_SYN_1"/>
    <property type="match status" value="1"/>
</dbReference>
<dbReference type="PROSITE" id="PS00565">
    <property type="entry name" value="ARGININOSUCCIN_SYN_2"/>
    <property type="match status" value="1"/>
</dbReference>